<organism>
    <name type="scientific">Influenza A virus (strain A/Swine/Wisconsin/1/1961 H1N1)</name>
    <dbReference type="NCBI Taxonomy" id="383533"/>
    <lineage>
        <taxon>Viruses</taxon>
        <taxon>Riboviria</taxon>
        <taxon>Orthornavirae</taxon>
        <taxon>Negarnaviricota</taxon>
        <taxon>Polyploviricotina</taxon>
        <taxon>Insthoviricetes</taxon>
        <taxon>Articulavirales</taxon>
        <taxon>Orthomyxoviridae</taxon>
        <taxon>Alphainfluenzavirus</taxon>
        <taxon>Alphainfluenzavirus influenzae</taxon>
        <taxon>Influenza A virus</taxon>
    </lineage>
</organism>
<gene>
    <name evidence="1" type="primary">M</name>
</gene>
<organismHost>
    <name type="scientific">Aves</name>
    <dbReference type="NCBI Taxonomy" id="8782"/>
</organismHost>
<organismHost>
    <name type="scientific">Homo sapiens</name>
    <name type="common">Human</name>
    <dbReference type="NCBI Taxonomy" id="9606"/>
</organismHost>
<organismHost>
    <name type="scientific">Sus scrofa</name>
    <name type="common">Pig</name>
    <dbReference type="NCBI Taxonomy" id="9823"/>
</organismHost>
<feature type="chain" id="PRO_0000326283" description="Matrix protein 1">
    <location>
        <begin position="1"/>
        <end position="252"/>
    </location>
</feature>
<feature type="region of interest" description="Membrane-binding" evidence="1">
    <location>
        <begin position="1"/>
        <end position="164"/>
    </location>
</feature>
<feature type="region of interest" description="RNP-binding" evidence="1">
    <location>
        <begin position="165"/>
        <end position="252"/>
    </location>
</feature>
<feature type="short sequence motif" description="Nuclear localization signal" evidence="1">
    <location>
        <begin position="101"/>
        <end position="105"/>
    </location>
</feature>
<feature type="sequence variant">
    <original>C</original>
    <variation>V</variation>
    <location>
        <position position="68"/>
    </location>
</feature>
<sequence length="252" mass="27856">MSLLTEVETYVLSIVPSGPLKAEIAQRLEDVFAGKNTDLEALMEWLKTRPILSPLTKGILGFVFTLTCPSERGLQRRRFVQNALNGNGDPNNMDKAVKLYRKLKREITFHGAKEVALSYSAGALASCMGLIYNRMGTVTTEVAFGLVCATCEQIADSQHRSHRQMVTTTNPLIRHENRMVLASTTAKAMEQMAGSSEQAAEAMEVASQARQMVQAMRTIGTHPSSSAGLKDDLLENLQAYQKRMGVQMQRFK</sequence>
<accession>Q89562</accession>
<accession>B3EUQ8</accession>
<name>M1_I61A1</name>
<evidence type="ECO:0000255" key="1">
    <source>
        <dbReference type="HAMAP-Rule" id="MF_04068"/>
    </source>
</evidence>
<keyword id="KW-0025">Alternative splicing</keyword>
<keyword id="KW-1048">Host nucleus</keyword>
<keyword id="KW-0472">Membrane</keyword>
<keyword id="KW-0694">RNA-binding</keyword>
<keyword id="KW-0468">Viral matrix protein</keyword>
<keyword id="KW-0946">Virion</keyword>
<reference key="1">
    <citation type="journal article" date="1991" name="J. Virol.">
        <title>Evolutionary analysis of the influenza A virus M gene with comparison of the M1 and M2 proteins.</title>
        <authorList>
            <person name="Ito T."/>
            <person name="Gorman O.T."/>
            <person name="Kawaoka Y."/>
            <person name="Bean W.J."/>
            <person name="Webster R.G."/>
        </authorList>
    </citation>
    <scope>NUCLEOTIDE SEQUENCE [GENOMIC RNA]</scope>
</reference>
<reference key="2">
    <citation type="submission" date="2008-06" db="EMBL/GenBank/DDBJ databases">
        <title>The NIAID influenza genome sequencing project.</title>
        <authorList>
            <person name="Spiro D."/>
            <person name="Halpin R."/>
            <person name="Boyne A."/>
            <person name="Bera J."/>
            <person name="Ghedin E."/>
            <person name="Hostetler J."/>
            <person name="Fedorova N."/>
            <person name="Kim M."/>
            <person name="Zaborsky J."/>
            <person name="Overton L."/>
            <person name="Djuric K."/>
            <person name="Sarmiento M."/>
            <person name="Sitz J."/>
            <person name="Katzel D."/>
            <person name="Webster R.G."/>
            <person name="Hoffmann E."/>
            <person name="Krauss S."/>
            <person name="Naeve C."/>
            <person name="Bolotov P."/>
            <person name="Bao Y."/>
            <person name="Sanders R."/>
            <person name="Dernovoy D."/>
            <person name="Kiryutin B."/>
            <person name="Lipman D.J."/>
            <person name="Tatusova T."/>
        </authorList>
    </citation>
    <scope>NUCLEOTIDE SEQUENCE [GENOMIC RNA]</scope>
</reference>
<reference key="3">
    <citation type="submission" date="2008-06" db="EMBL/GenBank/DDBJ databases">
        <authorList>
            <consortium name="The NIAID Influenza Genome Sequencing Consortium"/>
        </authorList>
    </citation>
    <scope>NUCLEOTIDE SEQUENCE [GENOMIC RNA]</scope>
</reference>
<comment type="function">
    <text evidence="1">Plays critical roles in virus replication, from virus entry and uncoating to assembly and budding of the virus particle. M1 binding to ribonucleocapsids (RNPs) in nucleus seems to inhibit viral transcription. Interaction of viral NEP with M1-RNP is thought to promote nuclear export of the complex, which is targeted to the virion assembly site at the apical plasma membrane in polarized epithelial cells. Interactions with NA and HA may bring M1, a non-raft-associated protein, into lipid rafts. Forms a continuous shell on the inner side of the lipid bilayer in virion, where it binds the RNP. During virus entry into cell, the M2 ion channel acidifies the internal virion core, inducing M1 dissociation from the RNP. M1-free RNPs are transported to the nucleus, where viral transcription and replication can take place.</text>
</comment>
<comment type="function">
    <text evidence="1">Determines the virion's shape: spherical or filamentous. Clinical isolates of influenza are characterized by the presence of significant proportion of filamentous virions, whereas after multiple passage on eggs or cell culture, virions have only spherical morphology. Filamentous virions are thought to be important to infect neighboring cells, and spherical virions more suited to spread through aerosol between hosts organisms.</text>
</comment>
<comment type="subunit">
    <text evidence="1">Homodimer and homomultimer. Interacts with NEP. Binds ribonucleocapsid by both interacting with genomic RNA and NP protein. May interact with HA and NA. Cannot bind NP without genomic RNA.</text>
</comment>
<comment type="subcellular location">
    <subcellularLocation>
        <location evidence="1">Virion membrane</location>
        <topology evidence="1">Peripheral membrane protein</topology>
        <orientation evidence="1">Cytoplasmic side</orientation>
    </subcellularLocation>
    <subcellularLocation>
        <location evidence="1">Host nucleus</location>
    </subcellularLocation>
</comment>
<comment type="alternative products">
    <event type="alternative splicing"/>
    <isoform>
        <id>Q89562-1</id>
        <name>M1</name>
        <sequence type="displayed"/>
    </isoform>
    <isoform>
        <id>Q67207-1</id>
        <name>M2</name>
        <sequence type="external"/>
    </isoform>
    <text>Only the first 9 residues are shared by the 2 isoforms.</text>
</comment>
<comment type="miscellaneous">
    <text evidence="1">Most abundant protein in virion. When expressed alone can form virus-like particles in transfected cells.</text>
</comment>
<comment type="similarity">
    <text evidence="1">Belongs to the influenza viruses Matrix protein M1 family.</text>
</comment>
<protein>
    <recommendedName>
        <fullName evidence="1">Matrix protein 1</fullName>
        <shortName evidence="1">M1</shortName>
    </recommendedName>
</protein>
<proteinExistence type="inferred from homology"/>
<dbReference type="EMBL" id="M63519">
    <property type="protein sequence ID" value="AAA43344.1"/>
    <property type="molecule type" value="Genomic_RNA"/>
</dbReference>
<dbReference type="EMBL" id="CY032214">
    <property type="protein sequence ID" value="ACD85155.1"/>
    <property type="molecule type" value="Viral_cRNA"/>
</dbReference>
<dbReference type="SMR" id="Q89562"/>
<dbReference type="Proteomes" id="UP000007769">
    <property type="component" value="Genome"/>
</dbReference>
<dbReference type="GO" id="GO:0042025">
    <property type="term" value="C:host cell nucleus"/>
    <property type="evidence" value="ECO:0007669"/>
    <property type="project" value="UniProtKB-SubCell"/>
</dbReference>
<dbReference type="GO" id="GO:0016020">
    <property type="term" value="C:membrane"/>
    <property type="evidence" value="ECO:0007669"/>
    <property type="project" value="UniProtKB-KW"/>
</dbReference>
<dbReference type="GO" id="GO:0055036">
    <property type="term" value="C:virion membrane"/>
    <property type="evidence" value="ECO:0007669"/>
    <property type="project" value="UniProtKB-SubCell"/>
</dbReference>
<dbReference type="GO" id="GO:0003723">
    <property type="term" value="F:RNA binding"/>
    <property type="evidence" value="ECO:0007669"/>
    <property type="project" value="UniProtKB-UniRule"/>
</dbReference>
<dbReference type="GO" id="GO:0039660">
    <property type="term" value="F:structural constituent of virion"/>
    <property type="evidence" value="ECO:0007669"/>
    <property type="project" value="UniProtKB-UniRule"/>
</dbReference>
<dbReference type="GO" id="GO:0046761">
    <property type="term" value="P:viral budding from plasma membrane"/>
    <property type="evidence" value="ECO:0007669"/>
    <property type="project" value="UniProtKB-UniRule"/>
</dbReference>
<dbReference type="FunFam" id="1.10.10.180:FF:000001">
    <property type="entry name" value="Matrix protein 1"/>
    <property type="match status" value="1"/>
</dbReference>
<dbReference type="FunFam" id="1.20.91.10:FF:000001">
    <property type="entry name" value="Matrix protein 1"/>
    <property type="match status" value="1"/>
</dbReference>
<dbReference type="Gene3D" id="1.10.10.180">
    <property type="match status" value="1"/>
</dbReference>
<dbReference type="Gene3D" id="1.20.91.10">
    <property type="match status" value="1"/>
</dbReference>
<dbReference type="HAMAP" id="MF_04068">
    <property type="entry name" value="INFV_M1"/>
    <property type="match status" value="1"/>
</dbReference>
<dbReference type="InterPro" id="IPR036039">
    <property type="entry name" value="Flu_matrix_M1"/>
</dbReference>
<dbReference type="InterPro" id="IPR013188">
    <property type="entry name" value="Flu_matrix_M1_C"/>
</dbReference>
<dbReference type="InterPro" id="IPR001561">
    <property type="entry name" value="Flu_matrix_M1_N"/>
</dbReference>
<dbReference type="InterPro" id="IPR015423">
    <property type="entry name" value="Flu_matrix_M1_N_sub1"/>
</dbReference>
<dbReference type="InterPro" id="IPR015799">
    <property type="entry name" value="Flu_matrix_M1_N_sub2"/>
</dbReference>
<dbReference type="InterPro" id="IPR037533">
    <property type="entry name" value="INFV_M1"/>
</dbReference>
<dbReference type="Pfam" id="PF00598">
    <property type="entry name" value="Flu_M1"/>
    <property type="match status" value="1"/>
</dbReference>
<dbReference type="Pfam" id="PF08289">
    <property type="entry name" value="Flu_M1_C"/>
    <property type="match status" value="1"/>
</dbReference>
<dbReference type="SMART" id="SM00759">
    <property type="entry name" value="Flu_M1_C"/>
    <property type="match status" value="1"/>
</dbReference>
<dbReference type="SUPFAM" id="SSF48145">
    <property type="entry name" value="Influenza virus matrix protein M1"/>
    <property type="match status" value="1"/>
</dbReference>